<dbReference type="EMBL" id="CP000325">
    <property type="protein sequence ID" value="ABL03481.1"/>
    <property type="molecule type" value="Genomic_DNA"/>
</dbReference>
<dbReference type="RefSeq" id="WP_003418601.1">
    <property type="nucleotide sequence ID" value="NC_008611.1"/>
</dbReference>
<dbReference type="SMR" id="A0PMB2"/>
<dbReference type="GeneID" id="98799387"/>
<dbReference type="KEGG" id="mul:MUL_0843"/>
<dbReference type="eggNOG" id="COG0361">
    <property type="taxonomic scope" value="Bacteria"/>
</dbReference>
<dbReference type="HOGENOM" id="CLU_151267_1_0_11"/>
<dbReference type="Proteomes" id="UP000000765">
    <property type="component" value="Chromosome"/>
</dbReference>
<dbReference type="GO" id="GO:0005829">
    <property type="term" value="C:cytosol"/>
    <property type="evidence" value="ECO:0007669"/>
    <property type="project" value="TreeGrafter"/>
</dbReference>
<dbReference type="GO" id="GO:0043022">
    <property type="term" value="F:ribosome binding"/>
    <property type="evidence" value="ECO:0007669"/>
    <property type="project" value="UniProtKB-UniRule"/>
</dbReference>
<dbReference type="GO" id="GO:0019843">
    <property type="term" value="F:rRNA binding"/>
    <property type="evidence" value="ECO:0007669"/>
    <property type="project" value="UniProtKB-UniRule"/>
</dbReference>
<dbReference type="GO" id="GO:0003743">
    <property type="term" value="F:translation initiation factor activity"/>
    <property type="evidence" value="ECO:0007669"/>
    <property type="project" value="UniProtKB-UniRule"/>
</dbReference>
<dbReference type="CDD" id="cd04451">
    <property type="entry name" value="S1_IF1"/>
    <property type="match status" value="1"/>
</dbReference>
<dbReference type="FunFam" id="2.40.50.140:FF:000002">
    <property type="entry name" value="Translation initiation factor IF-1"/>
    <property type="match status" value="1"/>
</dbReference>
<dbReference type="Gene3D" id="2.40.50.140">
    <property type="entry name" value="Nucleic acid-binding proteins"/>
    <property type="match status" value="1"/>
</dbReference>
<dbReference type="HAMAP" id="MF_00075">
    <property type="entry name" value="IF_1"/>
    <property type="match status" value="1"/>
</dbReference>
<dbReference type="InterPro" id="IPR012340">
    <property type="entry name" value="NA-bd_OB-fold"/>
</dbReference>
<dbReference type="InterPro" id="IPR006196">
    <property type="entry name" value="RNA-binding_domain_S1_IF1"/>
</dbReference>
<dbReference type="InterPro" id="IPR004368">
    <property type="entry name" value="TIF_IF1"/>
</dbReference>
<dbReference type="NCBIfam" id="TIGR00008">
    <property type="entry name" value="infA"/>
    <property type="match status" value="1"/>
</dbReference>
<dbReference type="PANTHER" id="PTHR33370">
    <property type="entry name" value="TRANSLATION INITIATION FACTOR IF-1, CHLOROPLASTIC"/>
    <property type="match status" value="1"/>
</dbReference>
<dbReference type="PANTHER" id="PTHR33370:SF1">
    <property type="entry name" value="TRANSLATION INITIATION FACTOR IF-1, CHLOROPLASTIC"/>
    <property type="match status" value="1"/>
</dbReference>
<dbReference type="Pfam" id="PF01176">
    <property type="entry name" value="eIF-1a"/>
    <property type="match status" value="1"/>
</dbReference>
<dbReference type="SUPFAM" id="SSF50249">
    <property type="entry name" value="Nucleic acid-binding proteins"/>
    <property type="match status" value="1"/>
</dbReference>
<dbReference type="PROSITE" id="PS50832">
    <property type="entry name" value="S1_IF1_TYPE"/>
    <property type="match status" value="1"/>
</dbReference>
<keyword id="KW-0963">Cytoplasm</keyword>
<keyword id="KW-0396">Initiation factor</keyword>
<keyword id="KW-0648">Protein biosynthesis</keyword>
<keyword id="KW-0694">RNA-binding</keyword>
<keyword id="KW-0699">rRNA-binding</keyword>
<evidence type="ECO:0000255" key="1">
    <source>
        <dbReference type="HAMAP-Rule" id="MF_00075"/>
    </source>
</evidence>
<accession>A0PMB2</accession>
<protein>
    <recommendedName>
        <fullName evidence="1">Translation initiation factor IF-1</fullName>
    </recommendedName>
</protein>
<sequence>MAKKDGAIEVEGRVVEPLPNAMFRIELENGHKVLAHISGKMRQHYIRILPEDRVVVELSPYDLSRGRIVYRYK</sequence>
<feature type="chain" id="PRO_0000338866" description="Translation initiation factor IF-1">
    <location>
        <begin position="1"/>
        <end position="73"/>
    </location>
</feature>
<feature type="domain" description="S1-like" evidence="1">
    <location>
        <begin position="1"/>
        <end position="73"/>
    </location>
</feature>
<name>IF1_MYCUA</name>
<gene>
    <name evidence="1" type="primary">infA</name>
    <name type="ordered locus">MUL_0843</name>
</gene>
<proteinExistence type="inferred from homology"/>
<comment type="function">
    <text evidence="1">One of the essential components for the initiation of protein synthesis. Stabilizes the binding of IF-2 and IF-3 on the 30S subunit to which N-formylmethionyl-tRNA(fMet) subsequently binds. Helps modulate mRNA selection, yielding the 30S pre-initiation complex (PIC). Upon addition of the 50S ribosomal subunit IF-1, IF-2 and IF-3 are released leaving the mature 70S translation initiation complex.</text>
</comment>
<comment type="subunit">
    <text evidence="1">Component of the 30S ribosomal translation pre-initiation complex which assembles on the 30S ribosome in the order IF-2 and IF-3, IF-1 and N-formylmethionyl-tRNA(fMet); mRNA recruitment can occur at any time during PIC assembly.</text>
</comment>
<comment type="subcellular location">
    <subcellularLocation>
        <location evidence="1">Cytoplasm</location>
    </subcellularLocation>
</comment>
<comment type="similarity">
    <text evidence="1">Belongs to the IF-1 family.</text>
</comment>
<organism>
    <name type="scientific">Mycobacterium ulcerans (strain Agy99)</name>
    <dbReference type="NCBI Taxonomy" id="362242"/>
    <lineage>
        <taxon>Bacteria</taxon>
        <taxon>Bacillati</taxon>
        <taxon>Actinomycetota</taxon>
        <taxon>Actinomycetes</taxon>
        <taxon>Mycobacteriales</taxon>
        <taxon>Mycobacteriaceae</taxon>
        <taxon>Mycobacterium</taxon>
        <taxon>Mycobacterium ulcerans group</taxon>
    </lineage>
</organism>
<reference key="1">
    <citation type="journal article" date="2007" name="Genome Res.">
        <title>Reductive evolution and niche adaptation inferred from the genome of Mycobacterium ulcerans, the causative agent of Buruli ulcer.</title>
        <authorList>
            <person name="Stinear T.P."/>
            <person name="Seemann T."/>
            <person name="Pidot S."/>
            <person name="Frigui W."/>
            <person name="Reysset G."/>
            <person name="Garnier T."/>
            <person name="Meurice G."/>
            <person name="Simon D."/>
            <person name="Bouchier C."/>
            <person name="Ma L."/>
            <person name="Tichit M."/>
            <person name="Porter J.L."/>
            <person name="Ryan J."/>
            <person name="Johnson P.D.R."/>
            <person name="Davies J.K."/>
            <person name="Jenkin G.A."/>
            <person name="Small P.L.C."/>
            <person name="Jones L.M."/>
            <person name="Tekaia F."/>
            <person name="Laval F."/>
            <person name="Daffe M."/>
            <person name="Parkhill J."/>
            <person name="Cole S.T."/>
        </authorList>
    </citation>
    <scope>NUCLEOTIDE SEQUENCE [LARGE SCALE GENOMIC DNA]</scope>
    <source>
        <strain>Agy99</strain>
    </source>
</reference>